<dbReference type="EMBL" id="BC061406">
    <property type="protein sequence ID" value="AAH61406.1"/>
    <property type="molecule type" value="mRNA"/>
</dbReference>
<dbReference type="RefSeq" id="NP_989125.1">
    <property type="nucleotide sequence ID" value="NM_203794.1"/>
</dbReference>
<dbReference type="SMR" id="Q6P825"/>
<dbReference type="FunCoup" id="Q6P825">
    <property type="interactions" value="2098"/>
</dbReference>
<dbReference type="STRING" id="8364.ENSXETP00000036133"/>
<dbReference type="PaxDb" id="8364-ENSXETP00000041847"/>
<dbReference type="DNASU" id="394730"/>
<dbReference type="GeneID" id="394730"/>
<dbReference type="KEGG" id="xtr:394730"/>
<dbReference type="AGR" id="Xenbase:XB-GENE-995150"/>
<dbReference type="CTD" id="10452"/>
<dbReference type="Xenbase" id="XB-GENE-995150">
    <property type="gene designation" value="tomm40"/>
</dbReference>
<dbReference type="eggNOG" id="KOG3296">
    <property type="taxonomic scope" value="Eukaryota"/>
</dbReference>
<dbReference type="InParanoid" id="Q6P825"/>
<dbReference type="OrthoDB" id="19656at2759"/>
<dbReference type="Proteomes" id="UP000008143">
    <property type="component" value="Chromosome 7"/>
</dbReference>
<dbReference type="GO" id="GO:0005741">
    <property type="term" value="C:mitochondrial outer membrane"/>
    <property type="evidence" value="ECO:0007669"/>
    <property type="project" value="UniProtKB-SubCell"/>
</dbReference>
<dbReference type="GO" id="GO:0046930">
    <property type="term" value="C:pore complex"/>
    <property type="evidence" value="ECO:0007669"/>
    <property type="project" value="UniProtKB-KW"/>
</dbReference>
<dbReference type="GO" id="GO:0015288">
    <property type="term" value="F:porin activity"/>
    <property type="evidence" value="ECO:0007669"/>
    <property type="project" value="UniProtKB-KW"/>
</dbReference>
<dbReference type="GO" id="GO:0008320">
    <property type="term" value="F:protein transmembrane transporter activity"/>
    <property type="evidence" value="ECO:0007669"/>
    <property type="project" value="InterPro"/>
</dbReference>
<dbReference type="GO" id="GO:0006811">
    <property type="term" value="P:monoatomic ion transport"/>
    <property type="evidence" value="ECO:0007669"/>
    <property type="project" value="UniProtKB-KW"/>
</dbReference>
<dbReference type="GO" id="GO:0030150">
    <property type="term" value="P:protein import into mitochondrial matrix"/>
    <property type="evidence" value="ECO:0007669"/>
    <property type="project" value="InterPro"/>
</dbReference>
<dbReference type="GO" id="GO:0006626">
    <property type="term" value="P:protein targeting to mitochondrion"/>
    <property type="evidence" value="ECO:0000250"/>
    <property type="project" value="UniProtKB"/>
</dbReference>
<dbReference type="CDD" id="cd07305">
    <property type="entry name" value="Porin3_Tom40"/>
    <property type="match status" value="1"/>
</dbReference>
<dbReference type="FunFam" id="2.40.160.10:FF:000005">
    <property type="entry name" value="mitochondrial import receptor subunit TOM40 homolog"/>
    <property type="match status" value="1"/>
</dbReference>
<dbReference type="Gene3D" id="2.40.160.10">
    <property type="entry name" value="Porin"/>
    <property type="match status" value="2"/>
</dbReference>
<dbReference type="InterPro" id="IPR023614">
    <property type="entry name" value="Porin_dom_sf"/>
</dbReference>
<dbReference type="InterPro" id="IPR027246">
    <property type="entry name" value="Porin_Euk/Tom40"/>
</dbReference>
<dbReference type="InterPro" id="IPR037930">
    <property type="entry name" value="Tom40"/>
</dbReference>
<dbReference type="PANTHER" id="PTHR10802">
    <property type="entry name" value="MITOCHONDRIAL IMPORT RECEPTOR SUBUNIT TOM40"/>
    <property type="match status" value="1"/>
</dbReference>
<dbReference type="Pfam" id="PF01459">
    <property type="entry name" value="Porin_3"/>
    <property type="match status" value="1"/>
</dbReference>
<organism>
    <name type="scientific">Xenopus tropicalis</name>
    <name type="common">Western clawed frog</name>
    <name type="synonym">Silurana tropicalis</name>
    <dbReference type="NCBI Taxonomy" id="8364"/>
    <lineage>
        <taxon>Eukaryota</taxon>
        <taxon>Metazoa</taxon>
        <taxon>Chordata</taxon>
        <taxon>Craniata</taxon>
        <taxon>Vertebrata</taxon>
        <taxon>Euteleostomi</taxon>
        <taxon>Amphibia</taxon>
        <taxon>Batrachia</taxon>
        <taxon>Anura</taxon>
        <taxon>Pipoidea</taxon>
        <taxon>Pipidae</taxon>
        <taxon>Xenopodinae</taxon>
        <taxon>Xenopus</taxon>
        <taxon>Silurana</taxon>
    </lineage>
</organism>
<proteinExistence type="evidence at transcript level"/>
<accession>Q6P825</accession>
<gene>
    <name type="primary">tomm40</name>
</gene>
<keyword id="KW-0406">Ion transport</keyword>
<keyword id="KW-0472">Membrane</keyword>
<keyword id="KW-0496">Mitochondrion</keyword>
<keyword id="KW-1000">Mitochondrion outer membrane</keyword>
<keyword id="KW-0626">Porin</keyword>
<keyword id="KW-0653">Protein transport</keyword>
<keyword id="KW-1185">Reference proteome</keyword>
<keyword id="KW-0812">Transmembrane</keyword>
<keyword id="KW-1134">Transmembrane beta strand</keyword>
<keyword id="KW-0813">Transport</keyword>
<reference key="1">
    <citation type="submission" date="2003-11" db="EMBL/GenBank/DDBJ databases">
        <authorList>
            <consortium name="NIH - Xenopus Gene Collection (XGC) project"/>
        </authorList>
    </citation>
    <scope>NUCLEOTIDE SEQUENCE [LARGE SCALE MRNA]</scope>
    <source>
        <tissue>Embryo</tissue>
    </source>
</reference>
<evidence type="ECO:0000250" key="1">
    <source>
        <dbReference type="UniProtKB" id="O96008"/>
    </source>
</evidence>
<evidence type="ECO:0000255" key="2"/>
<evidence type="ECO:0000256" key="3">
    <source>
        <dbReference type="SAM" id="MobiDB-lite"/>
    </source>
</evidence>
<evidence type="ECO:0000305" key="4"/>
<feature type="chain" id="PRO_0000051527" description="Mitochondrial import receptor subunit TOM40 homolog">
    <location>
        <begin position="1"/>
        <end position="336"/>
    </location>
</feature>
<feature type="region of interest" description="Disordered" evidence="3">
    <location>
        <begin position="1"/>
        <end position="58"/>
    </location>
</feature>
<feature type="compositionally biased region" description="Pro residues" evidence="3">
    <location>
        <begin position="10"/>
        <end position="21"/>
    </location>
</feature>
<feature type="compositionally biased region" description="Basic and acidic residues" evidence="3">
    <location>
        <begin position="42"/>
        <end position="52"/>
    </location>
</feature>
<protein>
    <recommendedName>
        <fullName>Mitochondrial import receptor subunit TOM40 homolog</fullName>
    </recommendedName>
    <alternativeName>
        <fullName>Translocase of outer membrane 40 kDa subunit homolog</fullName>
    </alternativeName>
</protein>
<sequence>MGNVLAASSPAPPAAGSPPAPGLVSVPPGFTMPPVAGLTPTPDKKETQEDRLPNPGTFEECHRKCKELFPIQMEGVKLTVNKGLSNYFQVNHTVSLSMIGESNYHFGATYVGTKQLGPAEAFPVLVGDLDNSGSLNAQIIHQVTSNVRSKIALQTQQSKFVNWQLDTEYRGEDFTAAVTLGNPDILVGSGILVAHYLQSITPSLALGGELVYHRRPGEEGTVMSLAGRYTAPNWTATLTLGQAGAHATYYHKANDQLQVGVEFEASTRMQDTSVSFGYQLDLPKANLLFKGSVDSNWIVGATLEKKLPPLPLTLAMGAFLNHKKNKFQCGFGLTIG</sequence>
<name>TOM40_XENTR</name>
<comment type="function">
    <text evidence="1">Channel-forming protein essential for import of protein precursors into mitochondria.</text>
</comment>
<comment type="subunit">
    <text evidence="1">Forms part of the preprotein translocase complex of the outer mitochondrial membrane (TOM complex). Interacts with mitochondrial targeting sequences (By similarity).</text>
</comment>
<comment type="subcellular location">
    <subcellularLocation>
        <location evidence="1">Mitochondrion outer membrane</location>
        <topology evidence="2">Multi-pass membrane protein</topology>
    </subcellularLocation>
</comment>
<comment type="similarity">
    <text evidence="4">Belongs to the Tom40 family.</text>
</comment>